<proteinExistence type="inferred from homology"/>
<reference key="1">
    <citation type="submission" date="2007-07" db="EMBL/GenBank/DDBJ databases">
        <title>Complete sequence of Fervidobacterium nodosum Rt17-B1.</title>
        <authorList>
            <consortium name="US DOE Joint Genome Institute"/>
            <person name="Copeland A."/>
            <person name="Lucas S."/>
            <person name="Lapidus A."/>
            <person name="Barry K."/>
            <person name="Glavina del Rio T."/>
            <person name="Dalin E."/>
            <person name="Tice H."/>
            <person name="Pitluck S."/>
            <person name="Saunders E."/>
            <person name="Brettin T."/>
            <person name="Bruce D."/>
            <person name="Detter J.C."/>
            <person name="Han C."/>
            <person name="Schmutz J."/>
            <person name="Larimer F."/>
            <person name="Land M."/>
            <person name="Hauser L."/>
            <person name="Kyrpides N."/>
            <person name="Mikhailova N."/>
            <person name="Nelson K."/>
            <person name="Gogarten J.P."/>
            <person name="Noll K."/>
            <person name="Richardson P."/>
        </authorList>
    </citation>
    <scope>NUCLEOTIDE SEQUENCE [LARGE SCALE GENOMIC DNA]</scope>
    <source>
        <strain>ATCC 35602 / DSM 5306 / Rt17-B1</strain>
    </source>
</reference>
<comment type="function">
    <text evidence="1">Catalyzes the formation of acetyl phosphate from acetate and ATP. Can also catalyze the reverse reaction.</text>
</comment>
<comment type="catalytic activity">
    <reaction evidence="1">
        <text>acetate + ATP = acetyl phosphate + ADP</text>
        <dbReference type="Rhea" id="RHEA:11352"/>
        <dbReference type="ChEBI" id="CHEBI:22191"/>
        <dbReference type="ChEBI" id="CHEBI:30089"/>
        <dbReference type="ChEBI" id="CHEBI:30616"/>
        <dbReference type="ChEBI" id="CHEBI:456216"/>
        <dbReference type="EC" id="2.7.2.1"/>
    </reaction>
</comment>
<comment type="cofactor">
    <cofactor evidence="1">
        <name>Mg(2+)</name>
        <dbReference type="ChEBI" id="CHEBI:18420"/>
    </cofactor>
    <cofactor evidence="1">
        <name>Mn(2+)</name>
        <dbReference type="ChEBI" id="CHEBI:29035"/>
    </cofactor>
    <text evidence="1">Mg(2+). Can also accept Mn(2+).</text>
</comment>
<comment type="pathway">
    <text evidence="1">Metabolic intermediate biosynthesis; acetyl-CoA biosynthesis; acetyl-CoA from acetate: step 1/2.</text>
</comment>
<comment type="subunit">
    <text evidence="1">Homodimer.</text>
</comment>
<comment type="subcellular location">
    <subcellularLocation>
        <location evidence="1">Cytoplasm</location>
    </subcellularLocation>
</comment>
<comment type="similarity">
    <text evidence="1">Belongs to the acetokinase family.</text>
</comment>
<dbReference type="EC" id="2.7.2.1" evidence="1"/>
<dbReference type="EMBL" id="CP000771">
    <property type="protein sequence ID" value="ABS60613.1"/>
    <property type="molecule type" value="Genomic_DNA"/>
</dbReference>
<dbReference type="RefSeq" id="WP_011993930.1">
    <property type="nucleotide sequence ID" value="NC_009718.1"/>
</dbReference>
<dbReference type="SMR" id="A7HL30"/>
<dbReference type="STRING" id="381764.Fnod_0760"/>
<dbReference type="KEGG" id="fno:Fnod_0760"/>
<dbReference type="eggNOG" id="COG0282">
    <property type="taxonomic scope" value="Bacteria"/>
</dbReference>
<dbReference type="HOGENOM" id="CLU_020352_0_1_0"/>
<dbReference type="OrthoDB" id="9802453at2"/>
<dbReference type="UniPathway" id="UPA00340">
    <property type="reaction ID" value="UER00458"/>
</dbReference>
<dbReference type="Proteomes" id="UP000002415">
    <property type="component" value="Chromosome"/>
</dbReference>
<dbReference type="GO" id="GO:0005737">
    <property type="term" value="C:cytoplasm"/>
    <property type="evidence" value="ECO:0007669"/>
    <property type="project" value="UniProtKB-SubCell"/>
</dbReference>
<dbReference type="GO" id="GO:0008776">
    <property type="term" value="F:acetate kinase activity"/>
    <property type="evidence" value="ECO:0007669"/>
    <property type="project" value="UniProtKB-UniRule"/>
</dbReference>
<dbReference type="GO" id="GO:0005524">
    <property type="term" value="F:ATP binding"/>
    <property type="evidence" value="ECO:0007669"/>
    <property type="project" value="UniProtKB-KW"/>
</dbReference>
<dbReference type="GO" id="GO:0000287">
    <property type="term" value="F:magnesium ion binding"/>
    <property type="evidence" value="ECO:0007669"/>
    <property type="project" value="UniProtKB-UniRule"/>
</dbReference>
<dbReference type="GO" id="GO:0006083">
    <property type="term" value="P:acetate metabolic process"/>
    <property type="evidence" value="ECO:0007669"/>
    <property type="project" value="TreeGrafter"/>
</dbReference>
<dbReference type="GO" id="GO:0006085">
    <property type="term" value="P:acetyl-CoA biosynthetic process"/>
    <property type="evidence" value="ECO:0007669"/>
    <property type="project" value="UniProtKB-UniRule"/>
</dbReference>
<dbReference type="CDD" id="cd24010">
    <property type="entry name" value="ASKHA_NBD_AcK_PK"/>
    <property type="match status" value="1"/>
</dbReference>
<dbReference type="Gene3D" id="3.30.420.40">
    <property type="match status" value="2"/>
</dbReference>
<dbReference type="HAMAP" id="MF_00020">
    <property type="entry name" value="Acetate_kinase"/>
    <property type="match status" value="1"/>
</dbReference>
<dbReference type="InterPro" id="IPR004372">
    <property type="entry name" value="Ac/propionate_kinase"/>
</dbReference>
<dbReference type="InterPro" id="IPR000890">
    <property type="entry name" value="Aliphatic_acid_kin_short-chain"/>
</dbReference>
<dbReference type="InterPro" id="IPR023865">
    <property type="entry name" value="Aliphatic_acid_kinase_CS"/>
</dbReference>
<dbReference type="InterPro" id="IPR043129">
    <property type="entry name" value="ATPase_NBD"/>
</dbReference>
<dbReference type="NCBIfam" id="TIGR00016">
    <property type="entry name" value="ackA"/>
    <property type="match status" value="1"/>
</dbReference>
<dbReference type="PANTHER" id="PTHR21060">
    <property type="entry name" value="ACETATE KINASE"/>
    <property type="match status" value="1"/>
</dbReference>
<dbReference type="PANTHER" id="PTHR21060:SF15">
    <property type="entry name" value="ACETATE KINASE-RELATED"/>
    <property type="match status" value="1"/>
</dbReference>
<dbReference type="Pfam" id="PF00871">
    <property type="entry name" value="Acetate_kinase"/>
    <property type="match status" value="1"/>
</dbReference>
<dbReference type="PIRSF" id="PIRSF000722">
    <property type="entry name" value="Acetate_prop_kin"/>
    <property type="match status" value="1"/>
</dbReference>
<dbReference type="PRINTS" id="PR00471">
    <property type="entry name" value="ACETATEKNASE"/>
</dbReference>
<dbReference type="SUPFAM" id="SSF53067">
    <property type="entry name" value="Actin-like ATPase domain"/>
    <property type="match status" value="2"/>
</dbReference>
<dbReference type="PROSITE" id="PS01075">
    <property type="entry name" value="ACETATE_KINASE_1"/>
    <property type="match status" value="1"/>
</dbReference>
<dbReference type="PROSITE" id="PS01076">
    <property type="entry name" value="ACETATE_KINASE_2"/>
    <property type="match status" value="1"/>
</dbReference>
<evidence type="ECO:0000255" key="1">
    <source>
        <dbReference type="HAMAP-Rule" id="MF_00020"/>
    </source>
</evidence>
<sequence length="406" mass="45135">MRVLVVNCGSSSIKYQFLDMDTEQVLCKGLAERIGIPGSRIVHKKDDQKVVVEKPMKDHEDALKYVLELVVDEKVGGVKDLKEIDAVGHRVVHGGEKFSGSVLIDEEVMRALEEYSYLAPLHNPPNIMGIRAMMKLLPGVPNVAVFDTAFHSKMPAKAYLYAIPYEYYKKYKIRRYGFHGTSHRYVSKRTAEILGLDYHKSKIITVHLGNGASIAAVMNGHSIDTSMGFTPLEGLVMGTRSGDIDPSIVTFLMEKEGLTAEEVYTILNKKSGVLGLTDGFSSDMRDIEGKALEGDPVCRLALDIYEYRIAKYIGAYIAAMNGVDAIAFTAGVGENSPITRKEICENYLSYLGIKIDDEKNNVKGEERIITTPDSKVKVLLVPTNEELMIARDTKEIIEKGLKQLEY</sequence>
<keyword id="KW-0067">ATP-binding</keyword>
<keyword id="KW-0963">Cytoplasm</keyword>
<keyword id="KW-0418">Kinase</keyword>
<keyword id="KW-0460">Magnesium</keyword>
<keyword id="KW-0479">Metal-binding</keyword>
<keyword id="KW-0547">Nucleotide-binding</keyword>
<keyword id="KW-1185">Reference proteome</keyword>
<keyword id="KW-0808">Transferase</keyword>
<protein>
    <recommendedName>
        <fullName evidence="1">Acetate kinase</fullName>
        <ecNumber evidence="1">2.7.2.1</ecNumber>
    </recommendedName>
    <alternativeName>
        <fullName evidence="1">Acetokinase</fullName>
    </alternativeName>
</protein>
<name>ACKA_FERNB</name>
<gene>
    <name evidence="1" type="primary">ackA</name>
    <name type="ordered locus">Fnod_0760</name>
</gene>
<accession>A7HL30</accession>
<organism>
    <name type="scientific">Fervidobacterium nodosum (strain ATCC 35602 / DSM 5306 / Rt17-B1)</name>
    <dbReference type="NCBI Taxonomy" id="381764"/>
    <lineage>
        <taxon>Bacteria</taxon>
        <taxon>Thermotogati</taxon>
        <taxon>Thermotogota</taxon>
        <taxon>Thermotogae</taxon>
        <taxon>Thermotogales</taxon>
        <taxon>Fervidobacteriaceae</taxon>
        <taxon>Fervidobacterium</taxon>
    </lineage>
</organism>
<feature type="chain" id="PRO_1000070996" description="Acetate kinase">
    <location>
        <begin position="1"/>
        <end position="406"/>
    </location>
</feature>
<feature type="active site" description="Proton donor/acceptor" evidence="1">
    <location>
        <position position="147"/>
    </location>
</feature>
<feature type="binding site" evidence="1">
    <location>
        <position position="7"/>
    </location>
    <ligand>
        <name>Mg(2+)</name>
        <dbReference type="ChEBI" id="CHEBI:18420"/>
    </ligand>
</feature>
<feature type="binding site" evidence="1">
    <location>
        <position position="14"/>
    </location>
    <ligand>
        <name>ATP</name>
        <dbReference type="ChEBI" id="CHEBI:30616"/>
    </ligand>
</feature>
<feature type="binding site" evidence="1">
    <location>
        <position position="90"/>
    </location>
    <ligand>
        <name>substrate</name>
    </ligand>
</feature>
<feature type="binding site" evidence="1">
    <location>
        <begin position="207"/>
        <end position="211"/>
    </location>
    <ligand>
        <name>ATP</name>
        <dbReference type="ChEBI" id="CHEBI:30616"/>
    </ligand>
</feature>
<feature type="binding site" evidence="1">
    <location>
        <begin position="283"/>
        <end position="285"/>
    </location>
    <ligand>
        <name>ATP</name>
        <dbReference type="ChEBI" id="CHEBI:30616"/>
    </ligand>
</feature>
<feature type="binding site" evidence="1">
    <location>
        <begin position="331"/>
        <end position="335"/>
    </location>
    <ligand>
        <name>ATP</name>
        <dbReference type="ChEBI" id="CHEBI:30616"/>
    </ligand>
</feature>
<feature type="binding site" evidence="1">
    <location>
        <position position="385"/>
    </location>
    <ligand>
        <name>Mg(2+)</name>
        <dbReference type="ChEBI" id="CHEBI:18420"/>
    </ligand>
</feature>
<feature type="site" description="Transition state stabilizer" evidence="1">
    <location>
        <position position="179"/>
    </location>
</feature>
<feature type="site" description="Transition state stabilizer" evidence="1">
    <location>
        <position position="240"/>
    </location>
</feature>